<proteinExistence type="evidence at protein level"/>
<accession>Q1MX22</accession>
<sequence length="177" mass="20258">MNHPRSIAMLAALWLVVSVTSTPVRRSPDLEARRRSAIDRSMIRFGRSTLPVVPPAQPSFLQRYSAPQPAALTADDLMTFLRAYEEDYSSPVSKKSASFVRFGRDPSFIRFGRSVDEENSGYQAETNTYPQRRHRARNHFIRLGRDNELSESNDEDRYEVESERTKRSVVDPCNDCA</sequence>
<dbReference type="EMBL" id="AB234100">
    <property type="protein sequence ID" value="BAE93471.1"/>
    <property type="molecule type" value="mRNA"/>
</dbReference>
<dbReference type="RefSeq" id="NP_001037000.1">
    <property type="nucleotide sequence ID" value="NM_001043535.2"/>
</dbReference>
<dbReference type="STRING" id="7091.Q1MX22"/>
<dbReference type="PaxDb" id="7091-BGIBMGA009271-TA"/>
<dbReference type="EnsemblMetazoa" id="NM_001043535.2">
    <property type="protein sequence ID" value="NP_001037000.1"/>
    <property type="gene ID" value="GeneID_692549"/>
</dbReference>
<dbReference type="GeneID" id="692549"/>
<dbReference type="KEGG" id="bmor:692549"/>
<dbReference type="CTD" id="14072"/>
<dbReference type="eggNOG" id="ENOG502T7MT">
    <property type="taxonomic scope" value="Eukaryota"/>
</dbReference>
<dbReference type="HOGENOM" id="CLU_1579855_0_0_1"/>
<dbReference type="InParanoid" id="Q1MX22"/>
<dbReference type="OrthoDB" id="592530at7088"/>
<dbReference type="Proteomes" id="UP000005204">
    <property type="component" value="Unassembled WGS sequence"/>
</dbReference>
<dbReference type="GO" id="GO:0005576">
    <property type="term" value="C:extracellular region"/>
    <property type="evidence" value="ECO:0007669"/>
    <property type="project" value="UniProtKB-SubCell"/>
</dbReference>
<dbReference type="GO" id="GO:0007218">
    <property type="term" value="P:neuropeptide signaling pathway"/>
    <property type="evidence" value="ECO:0007669"/>
    <property type="project" value="UniProtKB-KW"/>
</dbReference>
<protein>
    <recommendedName>
        <fullName evidence="4 6">FMRFamide-related peptides</fullName>
        <shortName evidence="4">FaRPs</shortName>
    </recommendedName>
    <alternativeName>
        <fullName evidence="4">Bommo-FMRFamide</fullName>
        <shortName evidence="4">BRFa</shortName>
    </alternativeName>
    <component>
        <recommendedName>
            <fullName evidence="4">SAIDRSMIRF-amide</fullName>
        </recommendedName>
        <alternativeName>
            <fullName evidence="4">MIRFamide</fullName>
            <shortName evidence="4">RFa-1</shortName>
        </alternativeName>
    </component>
    <component>
        <recommendedName>
            <fullName evidence="4">SASFVRF-amide</fullName>
        </recommendedName>
        <alternativeName>
            <fullName evidence="4">FVRFamide</fullName>
            <shortName evidence="4">RFa-2</shortName>
        </alternativeName>
    </component>
    <component>
        <recommendedName>
            <fullName evidence="4">DPSFIRF-amide</fullName>
        </recommendedName>
        <alternativeName>
            <fullName evidence="4">FIRFamide</fullName>
            <shortName evidence="4">RFa-3</shortName>
        </alternativeName>
    </component>
    <component>
        <recommendedName>
            <fullName evidence="4">ARNHFIRL-amide</fullName>
        </recommendedName>
        <alternativeName>
            <fullName evidence="4">FIRLamide</fullName>
            <shortName evidence="4">RFa-4</shortName>
        </alternativeName>
    </component>
</protein>
<reference evidence="5 6" key="1">
    <citation type="journal article" date="2006" name="Proc. Natl. Acad. Sci. U.S.A.">
        <title>Regulation of insect steroid hormone biosynthesis by innervating peptidergic neurons.</title>
        <authorList>
            <person name="Yamanaka N."/>
            <person name="Zitnan D."/>
            <person name="Kim Y.J."/>
            <person name="Adams M.E."/>
            <person name="Hua Y.J."/>
            <person name="Suzuki Y."/>
            <person name="Suzuki M."/>
            <person name="Suzuki A."/>
            <person name="Satake H."/>
            <person name="Mizoguchi A."/>
            <person name="Asaoka K."/>
            <person name="Tanaka Y."/>
            <person name="Kataoka H."/>
        </authorList>
    </citation>
    <scope>NUCLEOTIDE SEQUENCE [MRNA]</scope>
    <scope>PROTEIN SEQUENCE OF 105-112</scope>
    <scope>FUNCTION</scope>
    <scope>SUBCELLULAR LOCATION</scope>
    <scope>TISSUE SPECIFICITY</scope>
    <scope>DEVELOPMENTAL STAGE</scope>
    <scope>MASS SPECTROMETRY</scope>
    <scope>AMIDATION AT PHE-45; PHE-102; PHE-111 AND LEU-143</scope>
    <source>
        <strain evidence="6">Kinshu X Showa</strain>
        <tissue evidence="3">Larva</tissue>
    </source>
</reference>
<gene>
    <name evidence="4" type="primary">RFa</name>
</gene>
<keyword id="KW-0027">Amidation</keyword>
<keyword id="KW-0165">Cleavage on pair of basic residues</keyword>
<keyword id="KW-0903">Direct protein sequencing</keyword>
<keyword id="KW-0527">Neuropeptide</keyword>
<keyword id="KW-1185">Reference proteome</keyword>
<keyword id="KW-0677">Repeat</keyword>
<keyword id="KW-0964">Secreted</keyword>
<keyword id="KW-0732">Signal</keyword>
<name>FMRF_BOMMO</name>
<evidence type="ECO:0000255" key="1"/>
<evidence type="ECO:0000256" key="2">
    <source>
        <dbReference type="SAM" id="MobiDB-lite"/>
    </source>
</evidence>
<evidence type="ECO:0000269" key="3">
    <source>
    </source>
</evidence>
<evidence type="ECO:0000303" key="4">
    <source>
    </source>
</evidence>
<evidence type="ECO:0000305" key="5"/>
<evidence type="ECO:0000312" key="6">
    <source>
        <dbReference type="EMBL" id="BAE93471.1"/>
    </source>
</evidence>
<feature type="signal peptide" evidence="1">
    <location>
        <begin position="1"/>
        <end position="21"/>
    </location>
</feature>
<feature type="propeptide" id="PRO_0000393894" evidence="1 3">
    <location>
        <begin position="22"/>
        <end position="32"/>
    </location>
</feature>
<feature type="peptide" id="PRO_0000393895" description="SAIDRSMIRF-amide" evidence="3">
    <location>
        <begin position="36"/>
        <end position="45"/>
    </location>
</feature>
<feature type="propeptide" id="PRO_0000393896" evidence="3">
    <location>
        <begin position="47"/>
        <end position="93"/>
    </location>
</feature>
<feature type="peptide" id="PRO_0000393897" description="SASFVRF-amide" evidence="3">
    <location>
        <begin position="96"/>
        <end position="102"/>
    </location>
</feature>
<feature type="peptide" id="PRO_0000393898" description="DPSFIRF-amide" evidence="3">
    <location>
        <begin position="105"/>
        <end position="111"/>
    </location>
</feature>
<feature type="propeptide" id="PRO_0000393899" evidence="3">
    <location>
        <begin position="113"/>
        <end position="131"/>
    </location>
</feature>
<feature type="peptide" id="PRO_0000393900" description="ARNHFIRL-amide" evidence="3">
    <location>
        <begin position="136"/>
        <end position="143"/>
    </location>
</feature>
<feature type="propeptide" id="PRO_0000393901" evidence="3">
    <location>
        <begin position="145"/>
        <end position="177"/>
    </location>
</feature>
<feature type="region of interest" description="Disordered" evidence="2">
    <location>
        <begin position="145"/>
        <end position="177"/>
    </location>
</feature>
<feature type="compositionally biased region" description="Acidic residues" evidence="2">
    <location>
        <begin position="149"/>
        <end position="158"/>
    </location>
</feature>
<feature type="compositionally biased region" description="Basic and acidic residues" evidence="2">
    <location>
        <begin position="159"/>
        <end position="169"/>
    </location>
</feature>
<feature type="modified residue" description="Phenylalanine amide" evidence="3">
    <location>
        <position position="45"/>
    </location>
</feature>
<feature type="modified residue" description="Phenylalanine amide" evidence="3">
    <location>
        <position position="102"/>
    </location>
</feature>
<feature type="modified residue" description="Phenylalanine amide" evidence="3">
    <location>
        <position position="111"/>
    </location>
</feature>
<feature type="modified residue" description="Leucine amide" evidence="3">
    <location>
        <position position="143"/>
    </location>
</feature>
<comment type="function">
    <text evidence="3">Regulates ecdysteroidogenesis by direct innervation of the prothoracic gland by reducing cAMP production via the receptor for myosuppressin. The neurons that innervate the prothoracic gland during the fifth instar are most active during days 0-4, after which they reduce and then peak again on day 6. Expression suppresses the biosynthesis of steroid hormones called ecdysteroids that elicit molting and metamorphosis.</text>
</comment>
<comment type="subcellular location">
    <subcellularLocation>
        <location evidence="3">Secreted</location>
    </subcellularLocation>
    <text evidence="3">Detected at the gland surface.</text>
</comment>
<comment type="tissue specificity">
    <text evidence="3">Only expressed in the CNS and predominantly in the thoracic ganglia. Strongest expression is seen in two pairs of large neurons in each thoracic ganglion. These neurons are ventrolateral neurosecretory cells 1 and 2, they project their axons through transverse nerves into the periphery where axons from the prothoracic ganglion innervate the prothoracic gland.</text>
</comment>
<comment type="developmental stage">
    <text evidence="3">Expression is continuous throughout the developmental period, but is highest during the feeding period in the early half of the fifth instar stage (days 0-4). Expression decreases remarkably on day 5 before larvae start wandering on day 6, but stabilizes before the end of the fifth instar stage.</text>
</comment>
<comment type="mass spectrometry" mass="1194.6" method="MALDI" evidence="3">
    <molecule>SAIDRSMIRF-amide</molecule>
    <text>RFa-1.</text>
</comment>
<comment type="mass spectrometry" mass="812.4" method="MALDI" evidence="3">
    <molecule>SASFVRF-amide</molecule>
    <text>RFa-2.</text>
</comment>
<comment type="mass spectrometry" mass="880.5" method="MALDI" evidence="3">
    <molecule>DPSFIRF-amide</molecule>
    <text>RFa-3.</text>
</comment>
<comment type="mass spectrometry" mass="1025.6" method="MALDI" evidence="3">
    <molecule>ARNHFIRL-amide</molecule>
    <text>RFa-4.</text>
</comment>
<comment type="similarity">
    <text evidence="1">Belongs to the FARP (FMRFamide related peptide) family.</text>
</comment>
<organism>
    <name type="scientific">Bombyx mori</name>
    <name type="common">Silk moth</name>
    <dbReference type="NCBI Taxonomy" id="7091"/>
    <lineage>
        <taxon>Eukaryota</taxon>
        <taxon>Metazoa</taxon>
        <taxon>Ecdysozoa</taxon>
        <taxon>Arthropoda</taxon>
        <taxon>Hexapoda</taxon>
        <taxon>Insecta</taxon>
        <taxon>Pterygota</taxon>
        <taxon>Neoptera</taxon>
        <taxon>Endopterygota</taxon>
        <taxon>Lepidoptera</taxon>
        <taxon>Glossata</taxon>
        <taxon>Ditrysia</taxon>
        <taxon>Bombycoidea</taxon>
        <taxon>Bombycidae</taxon>
        <taxon>Bombycinae</taxon>
        <taxon>Bombyx</taxon>
    </lineage>
</organism>